<keyword id="KW-0027">Amidation</keyword>
<keyword id="KW-0165">Cleavage on pair of basic residues</keyword>
<keyword id="KW-1015">Disulfide bond</keyword>
<keyword id="KW-0372">Hormone</keyword>
<keyword id="KW-1185">Reference proteome</keyword>
<keyword id="KW-0964">Secreted</keyword>
<keyword id="KW-0732">Signal</keyword>
<accession>P61312</accession>
<accession>Q6L5N4</accession>
<feature type="signal peptide" evidence="7">
    <location>
        <begin position="1"/>
        <end position="25"/>
    </location>
</feature>
<feature type="propeptide" id="PRO_0000000983" evidence="1">
    <location>
        <begin position="26"/>
        <end position="96"/>
    </location>
</feature>
<feature type="peptide" id="PRO_0000000984" description="Adrenomedullin-2" evidence="1">
    <location>
        <begin position="99"/>
        <end position="145"/>
    </location>
</feature>
<feature type="peptide" id="PRO_0000000985" description="Intermedin-short" evidence="4">
    <location>
        <begin position="106"/>
        <end position="145"/>
    </location>
</feature>
<feature type="region of interest" description="Disordered" evidence="5">
    <location>
        <begin position="29"/>
        <end position="99"/>
    </location>
</feature>
<feature type="site" description="Required for CALCRL receptor interaction" evidence="3">
    <location>
        <position position="105"/>
    </location>
</feature>
<feature type="site" description="Required for CALCRL receptor interaction" evidence="3">
    <location>
        <position position="112"/>
    </location>
</feature>
<feature type="site" description="Required for CALCRL receptor interaction" evidence="3">
    <location>
        <position position="117"/>
    </location>
</feature>
<feature type="modified residue" description="Tyrosine amide" evidence="2">
    <location>
        <position position="145"/>
    </location>
</feature>
<feature type="disulfide bond" evidence="3">
    <location>
        <begin position="108"/>
        <end position="113"/>
    </location>
</feature>
<protein>
    <recommendedName>
        <fullName>Protein ADM2</fullName>
    </recommendedName>
    <alternativeName>
        <fullName evidence="8">Intermedin</fullName>
    </alternativeName>
    <component>
        <recommendedName>
            <fullName evidence="3">Adrenomedullin-2</fullName>
            <shortName>AM2</shortName>
        </recommendedName>
        <alternativeName>
            <fullName>Intermedin-long</fullName>
            <shortName>IMDL</shortName>
        </alternativeName>
    </component>
    <component>
        <recommendedName>
            <fullName>Intermedin-short</fullName>
            <shortName>IMDS</shortName>
        </recommendedName>
    </component>
</protein>
<evidence type="ECO:0000250" key="1"/>
<evidence type="ECO:0000250" key="2">
    <source>
        <dbReference type="UniProtKB" id="P35318"/>
    </source>
</evidence>
<evidence type="ECO:0000250" key="3">
    <source>
        <dbReference type="UniProtKB" id="Q7Z4H4"/>
    </source>
</evidence>
<evidence type="ECO:0000255" key="4"/>
<evidence type="ECO:0000256" key="5">
    <source>
        <dbReference type="SAM" id="MobiDB-lite"/>
    </source>
</evidence>
<evidence type="ECO:0000269" key="6">
    <source>
    </source>
</evidence>
<evidence type="ECO:0000269" key="7">
    <source>
    </source>
</evidence>
<evidence type="ECO:0000303" key="8">
    <source>
    </source>
</evidence>
<evidence type="ECO:0000305" key="9"/>
<evidence type="ECO:0000312" key="10">
    <source>
        <dbReference type="RGD" id="1302971"/>
    </source>
</evidence>
<name>ADM2_RAT</name>
<comment type="function">
    <text evidence="6">Intermedin/ADM2 is a peptide hormone that plays a role as physiological regulator of gastrointestinal and cardiovascular bioactivities mediated by the CALCRL-RAMPs receptor complexes. Activates the cAMP-dependent pathway through interaction with CALCRL-RAMP3 receptor complex.</text>
</comment>
<comment type="subcellular location">
    <subcellularLocation>
        <location evidence="3">Secreted</location>
    </subcellularLocation>
</comment>
<comment type="tissue specificity">
    <text evidence="6">Expression was restricted to the intermediate and anterior lobes of the pituitary.</text>
</comment>
<comment type="similarity">
    <text evidence="9">Belongs to the adrenomedullin family.</text>
</comment>
<sequence length="146" mass="15572">MAQLLMVTVTFGCISLLYLLPGTLSGSLGKGLRPREPPAKIPSSGPQPGHPSLRPVVWKPPHALQPQGRGNPALATVHLPQGGGSRHPGPQRHVGSRRPHAQLLRVGCVLGTCQVQNLSHRLWQLVRPSGRRDSAPVDPSSPHSYG</sequence>
<proteinExistence type="evidence at protein level"/>
<dbReference type="EMBL" id="AB121036">
    <property type="protein sequence ID" value="BAD07413.1"/>
    <property type="molecule type" value="mRNA"/>
</dbReference>
<dbReference type="EMBL" id="AB181297">
    <property type="protein sequence ID" value="BAD22678.1"/>
    <property type="molecule type" value="mRNA"/>
</dbReference>
<dbReference type="EMBL" id="AY590103">
    <property type="protein sequence ID" value="AAT01302.1"/>
    <property type="molecule type" value="mRNA"/>
</dbReference>
<dbReference type="RefSeq" id="NP_958829.1">
    <property type="nucleotide sequence ID" value="NM_201426.2"/>
</dbReference>
<dbReference type="SMR" id="P61312"/>
<dbReference type="FunCoup" id="P61312">
    <property type="interactions" value="46"/>
</dbReference>
<dbReference type="STRING" id="10116.ENSRNOP00000051266"/>
<dbReference type="PhosphoSitePlus" id="P61312"/>
<dbReference type="PaxDb" id="10116-ENSRNOP00000051266"/>
<dbReference type="Ensembl" id="ENSRNOT00000044854.3">
    <property type="protein sequence ID" value="ENSRNOP00000051266.1"/>
    <property type="gene ID" value="ENSRNOG00000029830.5"/>
</dbReference>
<dbReference type="GeneID" id="399475"/>
<dbReference type="KEGG" id="rno:399475"/>
<dbReference type="AGR" id="RGD:1302971"/>
<dbReference type="CTD" id="79924"/>
<dbReference type="RGD" id="1302971">
    <property type="gene designation" value="Adm2"/>
</dbReference>
<dbReference type="eggNOG" id="ENOG502S7F2">
    <property type="taxonomic scope" value="Eukaryota"/>
</dbReference>
<dbReference type="GeneTree" id="ENSGT00940000154380"/>
<dbReference type="HOGENOM" id="CLU_134508_0_0_1"/>
<dbReference type="InParanoid" id="P61312"/>
<dbReference type="OMA" id="VTFGCIS"/>
<dbReference type="OrthoDB" id="9907777at2759"/>
<dbReference type="Reactome" id="R-RNO-419812">
    <property type="pathway name" value="Calcitonin-like ligand receptors"/>
</dbReference>
<dbReference type="PRO" id="PR:P61312"/>
<dbReference type="Proteomes" id="UP000002494">
    <property type="component" value="Chromosome 7"/>
</dbReference>
<dbReference type="Bgee" id="ENSRNOG00000029830">
    <property type="expression patterns" value="Expressed in adult mammalian kidney and 12 other cell types or tissues"/>
</dbReference>
<dbReference type="GO" id="GO:0005615">
    <property type="term" value="C:extracellular space"/>
    <property type="evidence" value="ECO:0000266"/>
    <property type="project" value="RGD"/>
</dbReference>
<dbReference type="GO" id="GO:0005179">
    <property type="term" value="F:hormone activity"/>
    <property type="evidence" value="ECO:0000266"/>
    <property type="project" value="RGD"/>
</dbReference>
<dbReference type="GO" id="GO:0044877">
    <property type="term" value="F:protein-containing complex binding"/>
    <property type="evidence" value="ECO:0000266"/>
    <property type="project" value="RGD"/>
</dbReference>
<dbReference type="GO" id="GO:0007189">
    <property type="term" value="P:adenylate cyclase-activating G protein-coupled receptor signaling pathway"/>
    <property type="evidence" value="ECO:0000314"/>
    <property type="project" value="RGD"/>
</dbReference>
<dbReference type="GO" id="GO:1990410">
    <property type="term" value="P:adrenomedullin receptor signaling pathway"/>
    <property type="evidence" value="ECO:0000266"/>
    <property type="project" value="RGD"/>
</dbReference>
<dbReference type="GO" id="GO:0001525">
    <property type="term" value="P:angiogenesis"/>
    <property type="evidence" value="ECO:0000266"/>
    <property type="project" value="RGD"/>
</dbReference>
<dbReference type="GO" id="GO:0007631">
    <property type="term" value="P:feeding behavior"/>
    <property type="evidence" value="ECO:0000315"/>
    <property type="project" value="RGD"/>
</dbReference>
<dbReference type="GO" id="GO:0045776">
    <property type="term" value="P:negative regulation of blood pressure"/>
    <property type="evidence" value="ECO:0000315"/>
    <property type="project" value="RGD"/>
</dbReference>
<dbReference type="GO" id="GO:0045766">
    <property type="term" value="P:positive regulation of angiogenesis"/>
    <property type="evidence" value="ECO:0000266"/>
    <property type="project" value="RGD"/>
</dbReference>
<dbReference type="GO" id="GO:0010628">
    <property type="term" value="P:positive regulation of gene expression"/>
    <property type="evidence" value="ECO:0000266"/>
    <property type="project" value="RGD"/>
</dbReference>
<dbReference type="GO" id="GO:0010460">
    <property type="term" value="P:positive regulation of heart rate"/>
    <property type="evidence" value="ECO:0000318"/>
    <property type="project" value="GO_Central"/>
</dbReference>
<dbReference type="GO" id="GO:0003073">
    <property type="term" value="P:regulation of systemic arterial blood pressure"/>
    <property type="evidence" value="ECO:0000318"/>
    <property type="project" value="GO_Central"/>
</dbReference>
<dbReference type="InterPro" id="IPR051665">
    <property type="entry name" value="Adrenomedullin-reg_peptide"/>
</dbReference>
<dbReference type="PANTHER" id="PTHR23414">
    <property type="entry name" value="ADRENOMEDULLIN, ADM"/>
    <property type="match status" value="1"/>
</dbReference>
<dbReference type="PANTHER" id="PTHR23414:SF2">
    <property type="entry name" value="PROTEIN ADM2"/>
    <property type="match status" value="1"/>
</dbReference>
<reference key="1">
    <citation type="journal article" date="2004" name="FEBS Lett.">
        <title>Identification of novel adrenomedullin in mammals: a potent cardiovascular and renal regulator.</title>
        <authorList>
            <person name="Takei Y."/>
            <person name="Inoue K."/>
            <person name="Ogoshi M."/>
            <person name="Kawahara T."/>
            <person name="Bannai H."/>
            <person name="Miyano S."/>
        </authorList>
    </citation>
    <scope>NUCLEOTIDE SEQUENCE [MRNA]</scope>
    <source>
        <tissue>Kidney</tissue>
    </source>
</reference>
<reference key="2">
    <citation type="submission" date="2004-06" db="EMBL/GenBank/DDBJ databases">
        <title>cDNA for the precursor of rat adrenomedullin 2.</title>
        <authorList>
            <person name="Inoue K."/>
            <person name="Takei Y."/>
        </authorList>
    </citation>
    <scope>NUCLEOTIDE SEQUENCE [MRNA]</scope>
</reference>
<reference key="3">
    <citation type="submission" date="2004-04" db="EMBL/GenBank/DDBJ databases">
        <title>Rat IMD sequence.</title>
        <authorList>
            <person name="Chang C.L."/>
            <person name="Roh J."/>
            <person name="Hsu S.Y."/>
        </authorList>
    </citation>
    <scope>NUCLEOTIDE SEQUENCE [MRNA]</scope>
    <source>
        <strain>Sprague-Dawley</strain>
    </source>
</reference>
<reference key="4">
    <citation type="journal article" date="2004" name="J. Biol. Chem.">
        <title>Intermedin is a calcitonin/calcitonin gene-related peptide family peptide acting through the calcitonin receptor-like receptor/receptor activity-modifying protein receptor complexes.</title>
        <authorList>
            <person name="Roh J."/>
            <person name="Chang C.L."/>
            <person name="Bhalla A."/>
            <person name="Klein C."/>
            <person name="Hsu S.Y.T."/>
        </authorList>
    </citation>
    <scope>FUNCTION</scope>
    <scope>TISSUE SPECIFICITY</scope>
</reference>
<reference key="5">
    <citation type="journal article" date="2015" name="J. Proteome Res.">
        <title>Peptidomics for studying limited proteolysis.</title>
        <authorList>
            <person name="Tsuchiya T."/>
            <person name="Osaki T."/>
            <person name="Minamino N."/>
            <person name="Sasaki K."/>
        </authorList>
    </citation>
    <scope>CLEAVAGE OF SIGNAL PEPTIDE AFTER SER-25</scope>
    <scope>IDENTIFICATION BY MASS SPECTROMETRY</scope>
</reference>
<gene>
    <name evidence="10" type="primary">Adm2</name>
    <name type="synonym">Am2</name>
</gene>
<organism>
    <name type="scientific">Rattus norvegicus</name>
    <name type="common">Rat</name>
    <dbReference type="NCBI Taxonomy" id="10116"/>
    <lineage>
        <taxon>Eukaryota</taxon>
        <taxon>Metazoa</taxon>
        <taxon>Chordata</taxon>
        <taxon>Craniata</taxon>
        <taxon>Vertebrata</taxon>
        <taxon>Euteleostomi</taxon>
        <taxon>Mammalia</taxon>
        <taxon>Eutheria</taxon>
        <taxon>Euarchontoglires</taxon>
        <taxon>Glires</taxon>
        <taxon>Rodentia</taxon>
        <taxon>Myomorpha</taxon>
        <taxon>Muroidea</taxon>
        <taxon>Muridae</taxon>
        <taxon>Murinae</taxon>
        <taxon>Rattus</taxon>
    </lineage>
</organism>